<organism>
    <name type="scientific">Streptococcus thermophilus (strain ATCC BAA-491 / LMD-9)</name>
    <dbReference type="NCBI Taxonomy" id="322159"/>
    <lineage>
        <taxon>Bacteria</taxon>
        <taxon>Bacillati</taxon>
        <taxon>Bacillota</taxon>
        <taxon>Bacilli</taxon>
        <taxon>Lactobacillales</taxon>
        <taxon>Streptococcaceae</taxon>
        <taxon>Streptococcus</taxon>
    </lineage>
</organism>
<comment type="function">
    <text evidence="1">Catalyzes the reversible isomerization-deamination of glucosamine 6-phosphate (GlcN6P) to form fructose 6-phosphate (Fru6P) and ammonium ion.</text>
</comment>
<comment type="catalytic activity">
    <reaction evidence="1">
        <text>alpha-D-glucosamine 6-phosphate + H2O = beta-D-fructose 6-phosphate + NH4(+)</text>
        <dbReference type="Rhea" id="RHEA:12172"/>
        <dbReference type="ChEBI" id="CHEBI:15377"/>
        <dbReference type="ChEBI" id="CHEBI:28938"/>
        <dbReference type="ChEBI" id="CHEBI:57634"/>
        <dbReference type="ChEBI" id="CHEBI:75989"/>
        <dbReference type="EC" id="3.5.99.6"/>
    </reaction>
</comment>
<comment type="pathway">
    <text evidence="1">Amino-sugar metabolism; N-acetylneuraminate degradation; D-fructose 6-phosphate from N-acetylneuraminate: step 5/5.</text>
</comment>
<comment type="similarity">
    <text evidence="1">Belongs to the glucosamine/galactosamine-6-phosphate isomerase family. NagB subfamily.</text>
</comment>
<proteinExistence type="inferred from homology"/>
<gene>
    <name evidence="1" type="primary">nagB</name>
    <name type="ordered locus">STER_0581</name>
</gene>
<accession>Q03LS1</accession>
<name>NAGB_STRTD</name>
<feature type="chain" id="PRO_1000067032" description="Glucosamine-6-phosphate deaminase">
    <location>
        <begin position="1"/>
        <end position="233"/>
    </location>
</feature>
<feature type="active site" description="Proton acceptor; for enolization step" evidence="1">
    <location>
        <position position="62"/>
    </location>
</feature>
<feature type="active site" description="For ring-opening step" evidence="1">
    <location>
        <position position="128"/>
    </location>
</feature>
<feature type="active site" description="Proton acceptor; for ring-opening step" evidence="1">
    <location>
        <position position="130"/>
    </location>
</feature>
<feature type="active site" description="For ring-opening step" evidence="1">
    <location>
        <position position="135"/>
    </location>
</feature>
<protein>
    <recommendedName>
        <fullName evidence="1">Glucosamine-6-phosphate deaminase</fullName>
        <ecNumber evidence="1">3.5.99.6</ecNumber>
    </recommendedName>
    <alternativeName>
        <fullName evidence="1">GlcN6P deaminase</fullName>
        <shortName evidence="1">GNPDA</shortName>
    </alternativeName>
    <alternativeName>
        <fullName evidence="1">Glucosamine-6-phosphate isomerase</fullName>
    </alternativeName>
</protein>
<sequence>MKKILVKNQVEGGKVAFELLKESLTAGAQTLGLATGSSPIALYQEMVESDVDFSELYSVNLDEYVGLSPEHDQSYHAFMKAQLFDTKPFKESFLPDGMAEDLEKAAKDYDDVLAHHIIDLQILGIGSNGHIGFNEPGTPFDSQTHVVDLTDSTIEANSRFFASRGQVPTKAISMGIASIMAAKKIILFAYGDKKADAIFKMLKGPVTEEVPASVLQNHPDVTLILDQAAAAKL</sequence>
<dbReference type="EC" id="3.5.99.6" evidence="1"/>
<dbReference type="EMBL" id="CP000419">
    <property type="protein sequence ID" value="ABJ65851.1"/>
    <property type="molecule type" value="Genomic_DNA"/>
</dbReference>
<dbReference type="RefSeq" id="WP_011680874.1">
    <property type="nucleotide sequence ID" value="NC_008532.1"/>
</dbReference>
<dbReference type="SMR" id="Q03LS1"/>
<dbReference type="KEGG" id="ste:STER_0581"/>
<dbReference type="HOGENOM" id="CLU_049611_1_0_9"/>
<dbReference type="UniPathway" id="UPA00629">
    <property type="reaction ID" value="UER00684"/>
</dbReference>
<dbReference type="GO" id="GO:0005737">
    <property type="term" value="C:cytoplasm"/>
    <property type="evidence" value="ECO:0007669"/>
    <property type="project" value="TreeGrafter"/>
</dbReference>
<dbReference type="GO" id="GO:0004342">
    <property type="term" value="F:glucosamine-6-phosphate deaminase activity"/>
    <property type="evidence" value="ECO:0007669"/>
    <property type="project" value="UniProtKB-UniRule"/>
</dbReference>
<dbReference type="GO" id="GO:0042802">
    <property type="term" value="F:identical protein binding"/>
    <property type="evidence" value="ECO:0007669"/>
    <property type="project" value="TreeGrafter"/>
</dbReference>
<dbReference type="GO" id="GO:0005975">
    <property type="term" value="P:carbohydrate metabolic process"/>
    <property type="evidence" value="ECO:0007669"/>
    <property type="project" value="InterPro"/>
</dbReference>
<dbReference type="GO" id="GO:0006043">
    <property type="term" value="P:glucosamine catabolic process"/>
    <property type="evidence" value="ECO:0007669"/>
    <property type="project" value="TreeGrafter"/>
</dbReference>
<dbReference type="GO" id="GO:0006046">
    <property type="term" value="P:N-acetylglucosamine catabolic process"/>
    <property type="evidence" value="ECO:0007669"/>
    <property type="project" value="TreeGrafter"/>
</dbReference>
<dbReference type="GO" id="GO:0019262">
    <property type="term" value="P:N-acetylneuraminate catabolic process"/>
    <property type="evidence" value="ECO:0007669"/>
    <property type="project" value="UniProtKB-UniRule"/>
</dbReference>
<dbReference type="CDD" id="cd01399">
    <property type="entry name" value="GlcN6P_deaminase"/>
    <property type="match status" value="1"/>
</dbReference>
<dbReference type="FunFam" id="3.40.50.1360:FF:000003">
    <property type="entry name" value="Glucosamine-6-phosphate deaminase"/>
    <property type="match status" value="1"/>
</dbReference>
<dbReference type="Gene3D" id="3.40.50.1360">
    <property type="match status" value="1"/>
</dbReference>
<dbReference type="HAMAP" id="MF_01241">
    <property type="entry name" value="GlcN6P_deamin"/>
    <property type="match status" value="1"/>
</dbReference>
<dbReference type="InterPro" id="IPR006148">
    <property type="entry name" value="Glc/Gal-6P_isomerase"/>
</dbReference>
<dbReference type="InterPro" id="IPR004547">
    <property type="entry name" value="Glucosamine6P_isomerase"/>
</dbReference>
<dbReference type="InterPro" id="IPR018321">
    <property type="entry name" value="Glucosamine6P_isomerase_CS"/>
</dbReference>
<dbReference type="InterPro" id="IPR037171">
    <property type="entry name" value="NagB/RpiA_transferase-like"/>
</dbReference>
<dbReference type="PANTHER" id="PTHR11280">
    <property type="entry name" value="GLUCOSAMINE-6-PHOSPHATE ISOMERASE"/>
    <property type="match status" value="1"/>
</dbReference>
<dbReference type="PANTHER" id="PTHR11280:SF5">
    <property type="entry name" value="GLUCOSAMINE-6-PHOSPHATE ISOMERASE"/>
    <property type="match status" value="1"/>
</dbReference>
<dbReference type="Pfam" id="PF01182">
    <property type="entry name" value="Glucosamine_iso"/>
    <property type="match status" value="1"/>
</dbReference>
<dbReference type="SUPFAM" id="SSF100950">
    <property type="entry name" value="NagB/RpiA/CoA transferase-like"/>
    <property type="match status" value="1"/>
</dbReference>
<dbReference type="PROSITE" id="PS01161">
    <property type="entry name" value="GLC_GALNAC_ISOMERASE"/>
    <property type="match status" value="1"/>
</dbReference>
<evidence type="ECO:0000255" key="1">
    <source>
        <dbReference type="HAMAP-Rule" id="MF_01241"/>
    </source>
</evidence>
<reference key="1">
    <citation type="journal article" date="2006" name="Proc. Natl. Acad. Sci. U.S.A.">
        <title>Comparative genomics of the lactic acid bacteria.</title>
        <authorList>
            <person name="Makarova K.S."/>
            <person name="Slesarev A."/>
            <person name="Wolf Y.I."/>
            <person name="Sorokin A."/>
            <person name="Mirkin B."/>
            <person name="Koonin E.V."/>
            <person name="Pavlov A."/>
            <person name="Pavlova N."/>
            <person name="Karamychev V."/>
            <person name="Polouchine N."/>
            <person name="Shakhova V."/>
            <person name="Grigoriev I."/>
            <person name="Lou Y."/>
            <person name="Rohksar D."/>
            <person name="Lucas S."/>
            <person name="Huang K."/>
            <person name="Goodstein D.M."/>
            <person name="Hawkins T."/>
            <person name="Plengvidhya V."/>
            <person name="Welker D."/>
            <person name="Hughes J."/>
            <person name="Goh Y."/>
            <person name="Benson A."/>
            <person name="Baldwin K."/>
            <person name="Lee J.-H."/>
            <person name="Diaz-Muniz I."/>
            <person name="Dosti B."/>
            <person name="Smeianov V."/>
            <person name="Wechter W."/>
            <person name="Barabote R."/>
            <person name="Lorca G."/>
            <person name="Altermann E."/>
            <person name="Barrangou R."/>
            <person name="Ganesan B."/>
            <person name="Xie Y."/>
            <person name="Rawsthorne H."/>
            <person name="Tamir D."/>
            <person name="Parker C."/>
            <person name="Breidt F."/>
            <person name="Broadbent J.R."/>
            <person name="Hutkins R."/>
            <person name="O'Sullivan D."/>
            <person name="Steele J."/>
            <person name="Unlu G."/>
            <person name="Saier M.H. Jr."/>
            <person name="Klaenhammer T."/>
            <person name="Richardson P."/>
            <person name="Kozyavkin S."/>
            <person name="Weimer B.C."/>
            <person name="Mills D.A."/>
        </authorList>
    </citation>
    <scope>NUCLEOTIDE SEQUENCE [LARGE SCALE GENOMIC DNA]</scope>
    <source>
        <strain>ATCC BAA-491 / LMD-9</strain>
    </source>
</reference>
<keyword id="KW-0119">Carbohydrate metabolism</keyword>
<keyword id="KW-0378">Hydrolase</keyword>